<proteinExistence type="inferred from homology"/>
<protein>
    <recommendedName>
        <fullName evidence="1">Large ribosomal subunit protein bL20</fullName>
    </recommendedName>
    <alternativeName>
        <fullName evidence="2">50S ribosomal protein L20</fullName>
    </alternativeName>
</protein>
<accession>Q17VZ7</accession>
<evidence type="ECO:0000255" key="1">
    <source>
        <dbReference type="HAMAP-Rule" id="MF_00382"/>
    </source>
</evidence>
<evidence type="ECO:0000305" key="2"/>
<sequence length="116" mass="14044">MRVKTGVVRRRRHKKVLKLARGFYSGRRKHFRKAKEQLERSMYYAFRDRKQKKREFRSLWVVRINAACRMHDTSYSRFMHALKVANIELDRKILADMAMNDMQAFKSVLEGVKEHL</sequence>
<name>RL20_HELAH</name>
<dbReference type="EMBL" id="AM260522">
    <property type="protein sequence ID" value="CAK00179.1"/>
    <property type="molecule type" value="Genomic_DNA"/>
</dbReference>
<dbReference type="RefSeq" id="WP_011578269.1">
    <property type="nucleotide sequence ID" value="NC_008229.1"/>
</dbReference>
<dbReference type="SMR" id="Q17VZ7"/>
<dbReference type="STRING" id="382638.Hac_1455"/>
<dbReference type="GeneID" id="31758739"/>
<dbReference type="KEGG" id="hac:Hac_1455"/>
<dbReference type="eggNOG" id="COG0292">
    <property type="taxonomic scope" value="Bacteria"/>
</dbReference>
<dbReference type="HOGENOM" id="CLU_123265_0_1_7"/>
<dbReference type="OrthoDB" id="9808966at2"/>
<dbReference type="BioCyc" id="HACI382638:HAC_RS06180-MONOMER"/>
<dbReference type="Proteomes" id="UP000000775">
    <property type="component" value="Chromosome"/>
</dbReference>
<dbReference type="GO" id="GO:1990904">
    <property type="term" value="C:ribonucleoprotein complex"/>
    <property type="evidence" value="ECO:0007669"/>
    <property type="project" value="UniProtKB-KW"/>
</dbReference>
<dbReference type="GO" id="GO:0005840">
    <property type="term" value="C:ribosome"/>
    <property type="evidence" value="ECO:0007669"/>
    <property type="project" value="UniProtKB-KW"/>
</dbReference>
<dbReference type="GO" id="GO:0019843">
    <property type="term" value="F:rRNA binding"/>
    <property type="evidence" value="ECO:0007669"/>
    <property type="project" value="UniProtKB-UniRule"/>
</dbReference>
<dbReference type="GO" id="GO:0003735">
    <property type="term" value="F:structural constituent of ribosome"/>
    <property type="evidence" value="ECO:0007669"/>
    <property type="project" value="InterPro"/>
</dbReference>
<dbReference type="GO" id="GO:0000027">
    <property type="term" value="P:ribosomal large subunit assembly"/>
    <property type="evidence" value="ECO:0007669"/>
    <property type="project" value="UniProtKB-UniRule"/>
</dbReference>
<dbReference type="GO" id="GO:0006412">
    <property type="term" value="P:translation"/>
    <property type="evidence" value="ECO:0007669"/>
    <property type="project" value="InterPro"/>
</dbReference>
<dbReference type="CDD" id="cd07026">
    <property type="entry name" value="Ribosomal_L20"/>
    <property type="match status" value="1"/>
</dbReference>
<dbReference type="FunFam" id="1.10.1900.20:FF:000001">
    <property type="entry name" value="50S ribosomal protein L20"/>
    <property type="match status" value="1"/>
</dbReference>
<dbReference type="Gene3D" id="6.10.160.10">
    <property type="match status" value="1"/>
</dbReference>
<dbReference type="Gene3D" id="1.10.1900.20">
    <property type="entry name" value="Ribosomal protein L20"/>
    <property type="match status" value="1"/>
</dbReference>
<dbReference type="HAMAP" id="MF_00382">
    <property type="entry name" value="Ribosomal_bL20"/>
    <property type="match status" value="1"/>
</dbReference>
<dbReference type="InterPro" id="IPR005813">
    <property type="entry name" value="Ribosomal_bL20"/>
</dbReference>
<dbReference type="InterPro" id="IPR049946">
    <property type="entry name" value="RIBOSOMAL_L20_CS"/>
</dbReference>
<dbReference type="InterPro" id="IPR035566">
    <property type="entry name" value="Ribosomal_protein_bL20_C"/>
</dbReference>
<dbReference type="NCBIfam" id="TIGR01032">
    <property type="entry name" value="rplT_bact"/>
    <property type="match status" value="1"/>
</dbReference>
<dbReference type="PANTHER" id="PTHR10986">
    <property type="entry name" value="39S RIBOSOMAL PROTEIN L20"/>
    <property type="match status" value="1"/>
</dbReference>
<dbReference type="Pfam" id="PF00453">
    <property type="entry name" value="Ribosomal_L20"/>
    <property type="match status" value="1"/>
</dbReference>
<dbReference type="PRINTS" id="PR00062">
    <property type="entry name" value="RIBOSOMALL20"/>
</dbReference>
<dbReference type="SUPFAM" id="SSF74731">
    <property type="entry name" value="Ribosomal protein L20"/>
    <property type="match status" value="1"/>
</dbReference>
<dbReference type="PROSITE" id="PS00937">
    <property type="entry name" value="RIBOSOMAL_L20"/>
    <property type="match status" value="1"/>
</dbReference>
<keyword id="KW-0687">Ribonucleoprotein</keyword>
<keyword id="KW-0689">Ribosomal protein</keyword>
<keyword id="KW-0694">RNA-binding</keyword>
<keyword id="KW-0699">rRNA-binding</keyword>
<comment type="function">
    <text evidence="1">Binds directly to 23S ribosomal RNA and is necessary for the in vitro assembly process of the 50S ribosomal subunit. It is not involved in the protein synthesizing functions of that subunit.</text>
</comment>
<comment type="similarity">
    <text evidence="1">Belongs to the bacterial ribosomal protein bL20 family.</text>
</comment>
<organism>
    <name type="scientific">Helicobacter acinonychis (strain Sheeba)</name>
    <dbReference type="NCBI Taxonomy" id="382638"/>
    <lineage>
        <taxon>Bacteria</taxon>
        <taxon>Pseudomonadati</taxon>
        <taxon>Campylobacterota</taxon>
        <taxon>Epsilonproteobacteria</taxon>
        <taxon>Campylobacterales</taxon>
        <taxon>Helicobacteraceae</taxon>
        <taxon>Helicobacter</taxon>
    </lineage>
</organism>
<reference key="1">
    <citation type="journal article" date="2006" name="PLoS Genet.">
        <title>Who ate whom? Adaptive Helicobacter genomic changes that accompanied a host jump from early humans to large felines.</title>
        <authorList>
            <person name="Eppinger M."/>
            <person name="Baar C."/>
            <person name="Linz B."/>
            <person name="Raddatz G."/>
            <person name="Lanz C."/>
            <person name="Keller H."/>
            <person name="Morelli G."/>
            <person name="Gressmann H."/>
            <person name="Achtman M."/>
            <person name="Schuster S.C."/>
        </authorList>
    </citation>
    <scope>NUCLEOTIDE SEQUENCE [LARGE SCALE GENOMIC DNA]</scope>
    <source>
        <strain>Sheeba</strain>
    </source>
</reference>
<feature type="chain" id="PRO_1000048991" description="Large ribosomal subunit protein bL20">
    <location>
        <begin position="1"/>
        <end position="116"/>
    </location>
</feature>
<gene>
    <name evidence="1" type="primary">rplT</name>
    <name type="ordered locus">Hac_1455</name>
</gene>